<comment type="function">
    <text evidence="1">Conjugation of reduced glutathione to a wide number of exogenous and endogenous hydrophobic electrophiles.</text>
</comment>
<comment type="catalytic activity">
    <reaction evidence="1">
        <text>RX + glutathione = an S-substituted glutathione + a halide anion + H(+)</text>
        <dbReference type="Rhea" id="RHEA:16437"/>
        <dbReference type="ChEBI" id="CHEBI:15378"/>
        <dbReference type="ChEBI" id="CHEBI:16042"/>
        <dbReference type="ChEBI" id="CHEBI:17792"/>
        <dbReference type="ChEBI" id="CHEBI:57925"/>
        <dbReference type="ChEBI" id="CHEBI:90779"/>
        <dbReference type="EC" id="2.5.1.18"/>
    </reaction>
</comment>
<comment type="subunit">
    <text evidence="1">Homodimer.</text>
</comment>
<comment type="subcellular location">
    <subcellularLocation>
        <location evidence="2">Cytoplasm</location>
    </subcellularLocation>
</comment>
<comment type="similarity">
    <text evidence="2">Belongs to the GST superfamily. Theta family.</text>
</comment>
<organism>
    <name type="scientific">Mus musculus</name>
    <name type="common">Mouse</name>
    <dbReference type="NCBI Taxonomy" id="10090"/>
    <lineage>
        <taxon>Eukaryota</taxon>
        <taxon>Metazoa</taxon>
        <taxon>Chordata</taxon>
        <taxon>Craniata</taxon>
        <taxon>Vertebrata</taxon>
        <taxon>Euteleostomi</taxon>
        <taxon>Mammalia</taxon>
        <taxon>Eutheria</taxon>
        <taxon>Euarchontoglires</taxon>
        <taxon>Glires</taxon>
        <taxon>Rodentia</taxon>
        <taxon>Myomorpha</taxon>
        <taxon>Muroidea</taxon>
        <taxon>Muridae</taxon>
        <taxon>Murinae</taxon>
        <taxon>Mus</taxon>
        <taxon>Mus</taxon>
    </lineage>
</organism>
<accession>Q9D4P7</accession>
<feature type="chain" id="PRO_0000329076" description="Glutathione S-transferase theta-4">
    <location>
        <begin position="1"/>
        <end position="240"/>
    </location>
</feature>
<feature type="domain" description="GST N-terminal">
    <location>
        <begin position="1"/>
        <end position="82"/>
    </location>
</feature>
<feature type="domain" description="GST C-terminal">
    <location>
        <begin position="88"/>
        <end position="217"/>
    </location>
</feature>
<feature type="binding site" evidence="1">
    <location>
        <position position="40"/>
    </location>
    <ligand>
        <name>glutathione</name>
        <dbReference type="ChEBI" id="CHEBI:57925"/>
    </ligand>
</feature>
<feature type="binding site" evidence="1">
    <location>
        <begin position="53"/>
        <end position="54"/>
    </location>
    <ligand>
        <name>glutathione</name>
        <dbReference type="ChEBI" id="CHEBI:57925"/>
    </ligand>
</feature>
<feature type="binding site" evidence="1">
    <location>
        <begin position="66"/>
        <end position="67"/>
    </location>
    <ligand>
        <name>glutathione</name>
        <dbReference type="ChEBI" id="CHEBI:57925"/>
    </ligand>
</feature>
<protein>
    <recommendedName>
        <fullName evidence="2">Glutathione S-transferase theta-4</fullName>
        <ecNumber evidence="1">2.5.1.18</ecNumber>
    </recommendedName>
    <alternativeName>
        <fullName>GST class-theta-4</fullName>
    </alternativeName>
</protein>
<sequence>MGLELYMDLLSAPCRAVYIFARKNGIPFDFQFVDLLKGHHHSKEYIEINPLRKLPSLKDGKFILSESVAILFYLCRKYSAPSHWYPPDLHMRARVDEFMAWQHTAIQVPMSKILWIKLIIPMITGEEVPTERLEKTLDEVKRNLQQFEEKFLQDKMFITGDHISLADLVALVEMMQPMGSNHNVFVSSKLAEWRMRVELAIGSGLFWEAHERLVKLPNWDCSTLDPTIKMRICDFLQKFK</sequence>
<dbReference type="EC" id="2.5.1.18" evidence="1"/>
<dbReference type="EMBL" id="AK016340">
    <property type="protein sequence ID" value="BAB30196.1"/>
    <property type="molecule type" value="mRNA"/>
</dbReference>
<dbReference type="EMBL" id="BC061011">
    <property type="protein sequence ID" value="AAH61011.1"/>
    <property type="molecule type" value="mRNA"/>
</dbReference>
<dbReference type="CCDS" id="CCDS23933.1"/>
<dbReference type="RefSeq" id="NP_083748.3">
    <property type="nucleotide sequence ID" value="NM_029472.3"/>
</dbReference>
<dbReference type="SMR" id="Q9D4P7"/>
<dbReference type="FunCoup" id="Q9D4P7">
    <property type="interactions" value="457"/>
</dbReference>
<dbReference type="STRING" id="10090.ENSMUSP00000125604"/>
<dbReference type="PhosphoSitePlus" id="Q9D4P7"/>
<dbReference type="PaxDb" id="10090-ENSMUSP00000125604"/>
<dbReference type="ProteomicsDB" id="271344"/>
<dbReference type="Antibodypedia" id="78380">
    <property type="antibodies" value="3 antibodies from 3 providers"/>
</dbReference>
<dbReference type="DNASU" id="75886"/>
<dbReference type="Ensembl" id="ENSMUST00000160211.2">
    <property type="protein sequence ID" value="ENSMUSP00000125604.2"/>
    <property type="gene ID" value="ENSMUSG00000009093.8"/>
</dbReference>
<dbReference type="GeneID" id="75886"/>
<dbReference type="KEGG" id="mmu:75886"/>
<dbReference type="UCSC" id="uc007fre.2">
    <property type="organism name" value="mouse"/>
</dbReference>
<dbReference type="AGR" id="MGI:1923136"/>
<dbReference type="CTD" id="25774"/>
<dbReference type="MGI" id="MGI:1923136">
    <property type="gene designation" value="Gstt4"/>
</dbReference>
<dbReference type="VEuPathDB" id="HostDB:ENSMUSG00000009093"/>
<dbReference type="eggNOG" id="KOG0867">
    <property type="taxonomic scope" value="Eukaryota"/>
</dbReference>
<dbReference type="GeneTree" id="ENSGT00940000161301"/>
<dbReference type="HOGENOM" id="CLU_011226_2_0_1"/>
<dbReference type="InParanoid" id="Q9D4P7"/>
<dbReference type="OMA" id="IQQPMSK"/>
<dbReference type="OrthoDB" id="422574at2759"/>
<dbReference type="PhylomeDB" id="Q9D4P7"/>
<dbReference type="TreeFam" id="TF325759"/>
<dbReference type="BioGRID-ORCS" id="75886">
    <property type="hits" value="3 hits in 76 CRISPR screens"/>
</dbReference>
<dbReference type="ChiTaRS" id="Gstt4">
    <property type="organism name" value="mouse"/>
</dbReference>
<dbReference type="PRO" id="PR:Q9D4P7"/>
<dbReference type="Proteomes" id="UP000000589">
    <property type="component" value="Chromosome 10"/>
</dbReference>
<dbReference type="RNAct" id="Q9D4P7">
    <property type="molecule type" value="protein"/>
</dbReference>
<dbReference type="Bgee" id="ENSMUSG00000009093">
    <property type="expression patterns" value="Expressed in seminiferous tubule of testis and 10 other cell types or tissues"/>
</dbReference>
<dbReference type="ExpressionAtlas" id="Q9D4P7">
    <property type="expression patterns" value="baseline and differential"/>
</dbReference>
<dbReference type="GO" id="GO:0005737">
    <property type="term" value="C:cytoplasm"/>
    <property type="evidence" value="ECO:0007669"/>
    <property type="project" value="UniProtKB-SubCell"/>
</dbReference>
<dbReference type="GO" id="GO:0004364">
    <property type="term" value="F:glutathione transferase activity"/>
    <property type="evidence" value="ECO:0007669"/>
    <property type="project" value="UniProtKB-EC"/>
</dbReference>
<dbReference type="CDD" id="cd03183">
    <property type="entry name" value="GST_C_Theta"/>
    <property type="match status" value="1"/>
</dbReference>
<dbReference type="CDD" id="cd03050">
    <property type="entry name" value="GST_N_Theta"/>
    <property type="match status" value="1"/>
</dbReference>
<dbReference type="FunFam" id="1.20.1050.10:FF:000008">
    <property type="entry name" value="Glutathione S-transferase theta-1"/>
    <property type="match status" value="1"/>
</dbReference>
<dbReference type="FunFam" id="3.40.30.10:FF:000196">
    <property type="entry name" value="Glutathione S-transferase theta-4"/>
    <property type="match status" value="1"/>
</dbReference>
<dbReference type="Gene3D" id="1.20.1050.10">
    <property type="match status" value="1"/>
</dbReference>
<dbReference type="Gene3D" id="3.40.30.10">
    <property type="entry name" value="Glutaredoxin"/>
    <property type="match status" value="1"/>
</dbReference>
<dbReference type="InterPro" id="IPR010987">
    <property type="entry name" value="Glutathione-S-Trfase_C-like"/>
</dbReference>
<dbReference type="InterPro" id="IPR036282">
    <property type="entry name" value="Glutathione-S-Trfase_C_sf"/>
</dbReference>
<dbReference type="InterPro" id="IPR040079">
    <property type="entry name" value="Glutathione_S-Trfase"/>
</dbReference>
<dbReference type="InterPro" id="IPR004045">
    <property type="entry name" value="Glutathione_S-Trfase_N"/>
</dbReference>
<dbReference type="InterPro" id="IPR004046">
    <property type="entry name" value="GST_C"/>
</dbReference>
<dbReference type="InterPro" id="IPR040077">
    <property type="entry name" value="GST_C_Theta"/>
</dbReference>
<dbReference type="InterPro" id="IPR040075">
    <property type="entry name" value="GST_N_Theta"/>
</dbReference>
<dbReference type="InterPro" id="IPR051369">
    <property type="entry name" value="GST_Theta"/>
</dbReference>
<dbReference type="InterPro" id="IPR036249">
    <property type="entry name" value="Thioredoxin-like_sf"/>
</dbReference>
<dbReference type="PANTHER" id="PTHR43917">
    <property type="match status" value="1"/>
</dbReference>
<dbReference type="PANTHER" id="PTHR43917:SF13">
    <property type="entry name" value="GLUTATHIONE S-TRANSFERASE THETA-4-RELATED"/>
    <property type="match status" value="1"/>
</dbReference>
<dbReference type="Pfam" id="PF00043">
    <property type="entry name" value="GST_C"/>
    <property type="match status" value="1"/>
</dbReference>
<dbReference type="Pfam" id="PF13417">
    <property type="entry name" value="GST_N_3"/>
    <property type="match status" value="1"/>
</dbReference>
<dbReference type="SFLD" id="SFLDS00019">
    <property type="entry name" value="Glutathione_Transferase_(cytos"/>
    <property type="match status" value="1"/>
</dbReference>
<dbReference type="SFLD" id="SFLDG00358">
    <property type="entry name" value="Main_(cytGST)"/>
    <property type="match status" value="1"/>
</dbReference>
<dbReference type="SUPFAM" id="SSF47616">
    <property type="entry name" value="GST C-terminal domain-like"/>
    <property type="match status" value="1"/>
</dbReference>
<dbReference type="SUPFAM" id="SSF52833">
    <property type="entry name" value="Thioredoxin-like"/>
    <property type="match status" value="1"/>
</dbReference>
<dbReference type="PROSITE" id="PS50405">
    <property type="entry name" value="GST_CTER"/>
    <property type="match status" value="1"/>
</dbReference>
<dbReference type="PROSITE" id="PS50404">
    <property type="entry name" value="GST_NTER"/>
    <property type="match status" value="1"/>
</dbReference>
<proteinExistence type="evidence at transcript level"/>
<gene>
    <name evidence="3" type="primary">Gstt4</name>
</gene>
<name>GSTT4_MOUSE</name>
<reference key="1">
    <citation type="journal article" date="2005" name="Science">
        <title>The transcriptional landscape of the mammalian genome.</title>
        <authorList>
            <person name="Carninci P."/>
            <person name="Kasukawa T."/>
            <person name="Katayama S."/>
            <person name="Gough J."/>
            <person name="Frith M.C."/>
            <person name="Maeda N."/>
            <person name="Oyama R."/>
            <person name="Ravasi T."/>
            <person name="Lenhard B."/>
            <person name="Wells C."/>
            <person name="Kodzius R."/>
            <person name="Shimokawa K."/>
            <person name="Bajic V.B."/>
            <person name="Brenner S.E."/>
            <person name="Batalov S."/>
            <person name="Forrest A.R."/>
            <person name="Zavolan M."/>
            <person name="Davis M.J."/>
            <person name="Wilming L.G."/>
            <person name="Aidinis V."/>
            <person name="Allen J.E."/>
            <person name="Ambesi-Impiombato A."/>
            <person name="Apweiler R."/>
            <person name="Aturaliya R.N."/>
            <person name="Bailey T.L."/>
            <person name="Bansal M."/>
            <person name="Baxter L."/>
            <person name="Beisel K.W."/>
            <person name="Bersano T."/>
            <person name="Bono H."/>
            <person name="Chalk A.M."/>
            <person name="Chiu K.P."/>
            <person name="Choudhary V."/>
            <person name="Christoffels A."/>
            <person name="Clutterbuck D.R."/>
            <person name="Crowe M.L."/>
            <person name="Dalla E."/>
            <person name="Dalrymple B.P."/>
            <person name="de Bono B."/>
            <person name="Della Gatta G."/>
            <person name="di Bernardo D."/>
            <person name="Down T."/>
            <person name="Engstrom P."/>
            <person name="Fagiolini M."/>
            <person name="Faulkner G."/>
            <person name="Fletcher C.F."/>
            <person name="Fukushima T."/>
            <person name="Furuno M."/>
            <person name="Futaki S."/>
            <person name="Gariboldi M."/>
            <person name="Georgii-Hemming P."/>
            <person name="Gingeras T.R."/>
            <person name="Gojobori T."/>
            <person name="Green R.E."/>
            <person name="Gustincich S."/>
            <person name="Harbers M."/>
            <person name="Hayashi Y."/>
            <person name="Hensch T.K."/>
            <person name="Hirokawa N."/>
            <person name="Hill D."/>
            <person name="Huminiecki L."/>
            <person name="Iacono M."/>
            <person name="Ikeo K."/>
            <person name="Iwama A."/>
            <person name="Ishikawa T."/>
            <person name="Jakt M."/>
            <person name="Kanapin A."/>
            <person name="Katoh M."/>
            <person name="Kawasawa Y."/>
            <person name="Kelso J."/>
            <person name="Kitamura H."/>
            <person name="Kitano H."/>
            <person name="Kollias G."/>
            <person name="Krishnan S.P."/>
            <person name="Kruger A."/>
            <person name="Kummerfeld S.K."/>
            <person name="Kurochkin I.V."/>
            <person name="Lareau L.F."/>
            <person name="Lazarevic D."/>
            <person name="Lipovich L."/>
            <person name="Liu J."/>
            <person name="Liuni S."/>
            <person name="McWilliam S."/>
            <person name="Madan Babu M."/>
            <person name="Madera M."/>
            <person name="Marchionni L."/>
            <person name="Matsuda H."/>
            <person name="Matsuzawa S."/>
            <person name="Miki H."/>
            <person name="Mignone F."/>
            <person name="Miyake S."/>
            <person name="Morris K."/>
            <person name="Mottagui-Tabar S."/>
            <person name="Mulder N."/>
            <person name="Nakano N."/>
            <person name="Nakauchi H."/>
            <person name="Ng P."/>
            <person name="Nilsson R."/>
            <person name="Nishiguchi S."/>
            <person name="Nishikawa S."/>
            <person name="Nori F."/>
            <person name="Ohara O."/>
            <person name="Okazaki Y."/>
            <person name="Orlando V."/>
            <person name="Pang K.C."/>
            <person name="Pavan W.J."/>
            <person name="Pavesi G."/>
            <person name="Pesole G."/>
            <person name="Petrovsky N."/>
            <person name="Piazza S."/>
            <person name="Reed J."/>
            <person name="Reid J.F."/>
            <person name="Ring B.Z."/>
            <person name="Ringwald M."/>
            <person name="Rost B."/>
            <person name="Ruan Y."/>
            <person name="Salzberg S.L."/>
            <person name="Sandelin A."/>
            <person name="Schneider C."/>
            <person name="Schoenbach C."/>
            <person name="Sekiguchi K."/>
            <person name="Semple C.A."/>
            <person name="Seno S."/>
            <person name="Sessa L."/>
            <person name="Sheng Y."/>
            <person name="Shibata Y."/>
            <person name="Shimada H."/>
            <person name="Shimada K."/>
            <person name="Silva D."/>
            <person name="Sinclair B."/>
            <person name="Sperling S."/>
            <person name="Stupka E."/>
            <person name="Sugiura K."/>
            <person name="Sultana R."/>
            <person name="Takenaka Y."/>
            <person name="Taki K."/>
            <person name="Tammoja K."/>
            <person name="Tan S.L."/>
            <person name="Tang S."/>
            <person name="Taylor M.S."/>
            <person name="Tegner J."/>
            <person name="Teichmann S.A."/>
            <person name="Ueda H.R."/>
            <person name="van Nimwegen E."/>
            <person name="Verardo R."/>
            <person name="Wei C.L."/>
            <person name="Yagi K."/>
            <person name="Yamanishi H."/>
            <person name="Zabarovsky E."/>
            <person name="Zhu S."/>
            <person name="Zimmer A."/>
            <person name="Hide W."/>
            <person name="Bult C."/>
            <person name="Grimmond S.M."/>
            <person name="Teasdale R.D."/>
            <person name="Liu E.T."/>
            <person name="Brusic V."/>
            <person name="Quackenbush J."/>
            <person name="Wahlestedt C."/>
            <person name="Mattick J.S."/>
            <person name="Hume D.A."/>
            <person name="Kai C."/>
            <person name="Sasaki D."/>
            <person name="Tomaru Y."/>
            <person name="Fukuda S."/>
            <person name="Kanamori-Katayama M."/>
            <person name="Suzuki M."/>
            <person name="Aoki J."/>
            <person name="Arakawa T."/>
            <person name="Iida J."/>
            <person name="Imamura K."/>
            <person name="Itoh M."/>
            <person name="Kato T."/>
            <person name="Kawaji H."/>
            <person name="Kawagashira N."/>
            <person name="Kawashima T."/>
            <person name="Kojima M."/>
            <person name="Kondo S."/>
            <person name="Konno H."/>
            <person name="Nakano K."/>
            <person name="Ninomiya N."/>
            <person name="Nishio T."/>
            <person name="Okada M."/>
            <person name="Plessy C."/>
            <person name="Shibata K."/>
            <person name="Shiraki T."/>
            <person name="Suzuki S."/>
            <person name="Tagami M."/>
            <person name="Waki K."/>
            <person name="Watahiki A."/>
            <person name="Okamura-Oho Y."/>
            <person name="Suzuki H."/>
            <person name="Kawai J."/>
            <person name="Hayashizaki Y."/>
        </authorList>
    </citation>
    <scope>NUCLEOTIDE SEQUENCE [LARGE SCALE MRNA]</scope>
    <source>
        <strain>C57BL/6J</strain>
        <tissue>Testis</tissue>
    </source>
</reference>
<reference key="2">
    <citation type="journal article" date="2004" name="Genome Res.">
        <title>The status, quality, and expansion of the NIH full-length cDNA project: the Mammalian Gene Collection (MGC).</title>
        <authorList>
            <consortium name="The MGC Project Team"/>
        </authorList>
    </citation>
    <scope>NUCLEOTIDE SEQUENCE [LARGE SCALE MRNA]</scope>
    <source>
        <tissue>Testis</tissue>
    </source>
</reference>
<keyword id="KW-0963">Cytoplasm</keyword>
<keyword id="KW-1185">Reference proteome</keyword>
<keyword id="KW-0808">Transferase</keyword>
<evidence type="ECO:0000250" key="1">
    <source>
        <dbReference type="UniProtKB" id="P30711"/>
    </source>
</evidence>
<evidence type="ECO:0000305" key="2"/>
<evidence type="ECO:0000312" key="3">
    <source>
        <dbReference type="MGI" id="MGI:1923136"/>
    </source>
</evidence>